<protein>
    <recommendedName>
        <fullName>Matrix protein</fullName>
    </recommendedName>
    <alternativeName>
        <fullName>M2 protein</fullName>
    </alternativeName>
</protein>
<organismHost>
    <name type="scientific">Aphis</name>
    <dbReference type="NCBI Taxonomy" id="80764"/>
</organismHost>
<organismHost>
    <name type="scientific">Bidens pilosa</name>
    <name type="common">Hairy beggarticks</name>
    <name type="synonym">Cobbler's pegs</name>
    <dbReference type="NCBI Taxonomy" id="42337"/>
</organismHost>
<organismHost>
    <name type="scientific">Lactuca sativa</name>
    <name type="common">Garden lettuce</name>
    <dbReference type="NCBI Taxonomy" id="4236"/>
</organismHost>
<organismHost>
    <name type="scientific">Sonchus oleraceus</name>
    <name type="common">Common sowthistle</name>
    <dbReference type="NCBI Taxonomy" id="50207"/>
</organismHost>
<keyword id="KW-1185">Reference proteome</keyword>
<keyword id="KW-0468">Viral matrix protein</keyword>
<keyword id="KW-0946">Virion</keyword>
<evidence type="ECO:0000256" key="1">
    <source>
        <dbReference type="SAM" id="MobiDB-lite"/>
    </source>
</evidence>
<evidence type="ECO:0000305" key="2"/>
<sequence length="345" mass="38327">MEIDPNYVNPKYSSLKSTVMNSEVLTSKYKSAIHHAGDGELEDDILAVMEELHSMLQEKGLACHTENLEVFSSTILHLKTTGQENRAGDLIAAILSFGCSISAQAIVPSTLLKTMSEMLDSFATRNHELKLITKDLQEVVPRQVLKAKKKSKAKSAEGPSASTEDIKDSDTKGNQDIGDNGDLNSSINQRNREICYKHYTTDEFEALSLEKRQEIMKYYIQYILGAWGYNATDPTKTAMLYDLIDKHTVITVMRQSKEGTLTSDDILMAIDEVIDSVNSMSSCYGGYKATIGNDNGTPYLVLIPKEGVILLSYPPPIPVTHHYYNKALSFIFPCAITIFSSPIYI</sequence>
<organism>
    <name type="scientific">Sonchus yellow net virus</name>
    <name type="common">SYNV</name>
    <dbReference type="NCBI Taxonomy" id="11307"/>
    <lineage>
        <taxon>Viruses</taxon>
        <taxon>Riboviria</taxon>
        <taxon>Orthornavirae</taxon>
        <taxon>Negarnaviricota</taxon>
        <taxon>Haploviricotina</taxon>
        <taxon>Monjiviricetes</taxon>
        <taxon>Mononegavirales</taxon>
        <taxon>Rhabdoviridae</taxon>
        <taxon>Betarhabdovirinae</taxon>
        <taxon>Betanucleorhabdovirus</taxon>
        <taxon>Betanucleorhabdovirus retesonchi</taxon>
    </lineage>
</organism>
<reference key="1">
    <citation type="journal article" date="1987" name="Virology">
        <title>Structure of the M2 protein gene of sonchus yellow net virus.</title>
        <authorList>
            <person name="Heaton L.A."/>
            <person name="Zuidema D."/>
            <person name="Jackson A.O."/>
        </authorList>
    </citation>
    <scope>NUCLEOTIDE SEQUENCE [MRNA]</scope>
    <source>
        <strain>ATCC PV-263</strain>
    </source>
</reference>
<comment type="subcellular location">
    <subcellularLocation>
        <location evidence="2">Virion</location>
    </subcellularLocation>
</comment>
<gene>
    <name type="primary">M2</name>
</gene>
<proteinExistence type="evidence at transcript level"/>
<name>MATRX_SYNV</name>
<dbReference type="EMBL" id="L32603">
    <property type="protein sequence ID" value="AAA50381.1"/>
    <property type="molecule type" value="mRNA"/>
</dbReference>
<dbReference type="EMBL" id="M23023">
    <property type="protein sequence ID" value="AAA47899.1"/>
    <property type="molecule type" value="Genomic_RNA"/>
</dbReference>
<dbReference type="PIR" id="A27031">
    <property type="entry name" value="MFVNSY"/>
</dbReference>
<dbReference type="RefSeq" id="NP_042282.1">
    <property type="nucleotide sequence ID" value="NC_001615.3"/>
</dbReference>
<dbReference type="GeneID" id="1489878"/>
<dbReference type="KEGG" id="vg:1489878"/>
<dbReference type="Proteomes" id="UP000002326">
    <property type="component" value="Genome"/>
</dbReference>
<dbReference type="GO" id="GO:0044423">
    <property type="term" value="C:virion component"/>
    <property type="evidence" value="ECO:0007669"/>
    <property type="project" value="UniProtKB-KW"/>
</dbReference>
<dbReference type="GO" id="GO:0039660">
    <property type="term" value="F:structural constituent of virion"/>
    <property type="evidence" value="ECO:0007669"/>
    <property type="project" value="UniProtKB-KW"/>
</dbReference>
<feature type="chain" id="PRO_0000222853" description="Matrix protein">
    <location>
        <begin position="1"/>
        <end position="345"/>
    </location>
</feature>
<feature type="region of interest" description="Disordered" evidence="1">
    <location>
        <begin position="148"/>
        <end position="185"/>
    </location>
</feature>
<feature type="compositionally biased region" description="Basic and acidic residues" evidence="1">
    <location>
        <begin position="164"/>
        <end position="173"/>
    </location>
</feature>
<accession>P19692</accession>